<evidence type="ECO:0000255" key="1"/>
<evidence type="ECO:0000305" key="2"/>
<feature type="chain" id="PRO_0000201382" description="Probable Ni/Fe-hydrogenase B-type cytochrome subunit">
    <location>
        <begin position="1"/>
        <end position="239"/>
    </location>
</feature>
<feature type="transmembrane region" description="Helical" evidence="1">
    <location>
        <begin position="31"/>
        <end position="51"/>
    </location>
</feature>
<feature type="transmembrane region" description="Helical" evidence="1">
    <location>
        <begin position="75"/>
        <end position="95"/>
    </location>
</feature>
<feature type="transmembrane region" description="Helical" evidence="1">
    <location>
        <begin position="142"/>
        <end position="163"/>
    </location>
</feature>
<feature type="transmembrane region" description="Helical" evidence="1">
    <location>
        <begin position="196"/>
        <end position="213"/>
    </location>
</feature>
<gene>
    <name type="primary">hupC</name>
</gene>
<protein>
    <recommendedName>
        <fullName>Probable Ni/Fe-hydrogenase B-type cytochrome subunit</fullName>
    </recommendedName>
</protein>
<organism>
    <name type="scientific">Rhizobium leguminosarum bv. viciae</name>
    <dbReference type="NCBI Taxonomy" id="387"/>
    <lineage>
        <taxon>Bacteria</taxon>
        <taxon>Pseudomonadati</taxon>
        <taxon>Pseudomonadota</taxon>
        <taxon>Alphaproteobacteria</taxon>
        <taxon>Hyphomicrobiales</taxon>
        <taxon>Rhizobiaceae</taxon>
        <taxon>Rhizobium/Agrobacterium group</taxon>
        <taxon>Rhizobium</taxon>
    </lineage>
</organism>
<reference key="1">
    <citation type="journal article" date="1992" name="J. Bacteriol.">
        <title>Nucleotide sequence and characterization of four additional genes of the hydrogenase structural operon from Rhizobium leguminosarum bv. viciae.</title>
        <authorList>
            <person name="Hidalgo E."/>
            <person name="Palacios J.M."/>
            <person name="Murillo J."/>
            <person name="Ruiz-Argueso T."/>
        </authorList>
    </citation>
    <scope>NUCLEOTIDE SEQUENCE [GENOMIC DNA]</scope>
    <source>
        <strain>UPM791</strain>
    </source>
</reference>
<reference key="2">
    <citation type="journal article" date="1997" name="Mol. Plant Microbe Interact.">
        <title>Organization of the hup-region and its differential transcription in non-symbiotic and symbiotic cells of Rhizobium leguminosarum bv. viciae B10.</title>
        <authorList>
            <person name="Brito B."/>
            <person name="Palacios J.M."/>
            <person name="Imperial J."/>
            <person name="Ruiz-Argueso T."/>
            <person name="Yang W.C."/>
            <person name="Bisseling T."/>
            <person name="Schmitt H."/>
            <person name="Kerl V."/>
            <person name="Bauer T."/>
            <person name="Kokotek W."/>
            <person name="Lotz W."/>
        </authorList>
    </citation>
    <scope>NUCLEOTIDE SEQUENCE [GENOMIC DNA]</scope>
    <source>
        <strain>B10</strain>
    </source>
</reference>
<sequence>MTIHETLAADAHGEKAIERQSVYVYEAPVRIWHWINAFSILTLALTGYFIGSPLPSVPGEASANFLMGYIRFIHFAAGQLLAVFLILRVYWAFVGNVHARQIFYVPFWSGRFWKEWLHEVGWYTFLVRQPKKYVGHNPLPQFTMFLMFTLPLLFMAITGFALYSEGAGRDSWEYSLFGWVFSIWPNSQDIHTYHHLGMWVILVFVMVHIYVAVREDIMSRQSIISSMISGERLFKDRED</sequence>
<accession>P27648</accession>
<name>CYBH_RHILV</name>
<dbReference type="EMBL" id="X52974">
    <property type="protein sequence ID" value="CAA37150.1"/>
    <property type="molecule type" value="Genomic_DNA"/>
</dbReference>
<dbReference type="EMBL" id="Z36981">
    <property type="protein sequence ID" value="CAA85432.1"/>
    <property type="molecule type" value="Genomic_DNA"/>
</dbReference>
<dbReference type="PIR" id="A41892">
    <property type="entry name" value="A41892"/>
</dbReference>
<dbReference type="SMR" id="P27648"/>
<dbReference type="GO" id="GO:0005886">
    <property type="term" value="C:plasma membrane"/>
    <property type="evidence" value="ECO:0007669"/>
    <property type="project" value="UniProtKB-SubCell"/>
</dbReference>
<dbReference type="GO" id="GO:0009055">
    <property type="term" value="F:electron transfer activity"/>
    <property type="evidence" value="ECO:0007669"/>
    <property type="project" value="InterPro"/>
</dbReference>
<dbReference type="GO" id="GO:0020037">
    <property type="term" value="F:heme binding"/>
    <property type="evidence" value="ECO:0007669"/>
    <property type="project" value="TreeGrafter"/>
</dbReference>
<dbReference type="GO" id="GO:0005506">
    <property type="term" value="F:iron ion binding"/>
    <property type="evidence" value="ECO:0007669"/>
    <property type="project" value="InterPro"/>
</dbReference>
<dbReference type="GO" id="GO:0022904">
    <property type="term" value="P:respiratory electron transport chain"/>
    <property type="evidence" value="ECO:0007669"/>
    <property type="project" value="InterPro"/>
</dbReference>
<dbReference type="FunFam" id="1.20.950.20:FF:000003">
    <property type="entry name" value="Ni/Fe-hydrogenase 1 b-type cytochrome subunit"/>
    <property type="match status" value="1"/>
</dbReference>
<dbReference type="Gene3D" id="1.20.950.20">
    <property type="entry name" value="Transmembrane di-heme cytochromes, Chain C"/>
    <property type="match status" value="1"/>
</dbReference>
<dbReference type="InterPro" id="IPR011577">
    <property type="entry name" value="Cyt_b561_bac/Ni-Hgenase"/>
</dbReference>
<dbReference type="InterPro" id="IPR016174">
    <property type="entry name" value="Di-haem_cyt_TM"/>
</dbReference>
<dbReference type="InterPro" id="IPR051542">
    <property type="entry name" value="Hydrogenase_cytochrome"/>
</dbReference>
<dbReference type="InterPro" id="IPR000516">
    <property type="entry name" value="Ni-dep_Hydgase_cyt-B"/>
</dbReference>
<dbReference type="NCBIfam" id="TIGR02125">
    <property type="entry name" value="CytB-hydogenase"/>
    <property type="match status" value="1"/>
</dbReference>
<dbReference type="PANTHER" id="PTHR30485">
    <property type="entry name" value="NI/FE-HYDROGENASE 1 B-TYPE CYTOCHROME SUBUNIT"/>
    <property type="match status" value="1"/>
</dbReference>
<dbReference type="PANTHER" id="PTHR30485:SF0">
    <property type="entry name" value="NI_FE-HYDROGENASE 1 B-TYPE CYTOCHROME SUBUNIT-RELATED"/>
    <property type="match status" value="1"/>
</dbReference>
<dbReference type="Pfam" id="PF01292">
    <property type="entry name" value="Ni_hydr_CYTB"/>
    <property type="match status" value="1"/>
</dbReference>
<dbReference type="PRINTS" id="PR00161">
    <property type="entry name" value="NIHGNASECYTB"/>
</dbReference>
<dbReference type="SUPFAM" id="SSF81342">
    <property type="entry name" value="Transmembrane di-heme cytochromes"/>
    <property type="match status" value="1"/>
</dbReference>
<dbReference type="PROSITE" id="PS00882">
    <property type="entry name" value="NI_HGENASE_CYTB_1"/>
    <property type="match status" value="1"/>
</dbReference>
<dbReference type="PROSITE" id="PS00883">
    <property type="entry name" value="NI_HGENASE_CYTB_2"/>
    <property type="match status" value="1"/>
</dbReference>
<comment type="function">
    <text>B-type cytochrome involved in electron transfer from hydrogenase to oxygen.</text>
</comment>
<comment type="subcellular location">
    <subcellularLocation>
        <location>Cell membrane</location>
        <topology>Multi-pass membrane protein</topology>
    </subcellularLocation>
</comment>
<comment type="similarity">
    <text evidence="2">Belongs to the HupC/HyaC/HydC family.</text>
</comment>
<proteinExistence type="inferred from homology"/>
<keyword id="KW-1003">Cell membrane</keyword>
<keyword id="KW-0249">Electron transport</keyword>
<keyword id="KW-0349">Heme</keyword>
<keyword id="KW-0408">Iron</keyword>
<keyword id="KW-0472">Membrane</keyword>
<keyword id="KW-0479">Metal-binding</keyword>
<keyword id="KW-0812">Transmembrane</keyword>
<keyword id="KW-1133">Transmembrane helix</keyword>
<keyword id="KW-0813">Transport</keyword>